<dbReference type="EC" id="3.5.4.13" evidence="1"/>
<dbReference type="EMBL" id="CP000381">
    <property type="protein sequence ID" value="ABX72997.1"/>
    <property type="molecule type" value="Genomic_DNA"/>
</dbReference>
<dbReference type="RefSeq" id="WP_002219476.1">
    <property type="nucleotide sequence ID" value="NC_010120.1"/>
</dbReference>
<dbReference type="SMR" id="A9M3Z7"/>
<dbReference type="KEGG" id="nmn:NMCC_0807"/>
<dbReference type="HOGENOM" id="CLU_087476_4_0_4"/>
<dbReference type="UniPathway" id="UPA00610">
    <property type="reaction ID" value="UER00665"/>
</dbReference>
<dbReference type="Proteomes" id="UP000001177">
    <property type="component" value="Chromosome"/>
</dbReference>
<dbReference type="GO" id="GO:0008829">
    <property type="term" value="F:dCTP deaminase activity"/>
    <property type="evidence" value="ECO:0007669"/>
    <property type="project" value="UniProtKB-UniRule"/>
</dbReference>
<dbReference type="GO" id="GO:0000166">
    <property type="term" value="F:nucleotide binding"/>
    <property type="evidence" value="ECO:0007669"/>
    <property type="project" value="UniProtKB-KW"/>
</dbReference>
<dbReference type="GO" id="GO:0006226">
    <property type="term" value="P:dUMP biosynthetic process"/>
    <property type="evidence" value="ECO:0007669"/>
    <property type="project" value="UniProtKB-UniPathway"/>
</dbReference>
<dbReference type="GO" id="GO:0006229">
    <property type="term" value="P:dUTP biosynthetic process"/>
    <property type="evidence" value="ECO:0007669"/>
    <property type="project" value="UniProtKB-UniRule"/>
</dbReference>
<dbReference type="GO" id="GO:0015949">
    <property type="term" value="P:nucleobase-containing small molecule interconversion"/>
    <property type="evidence" value="ECO:0007669"/>
    <property type="project" value="TreeGrafter"/>
</dbReference>
<dbReference type="CDD" id="cd07557">
    <property type="entry name" value="trimeric_dUTPase"/>
    <property type="match status" value="1"/>
</dbReference>
<dbReference type="FunFam" id="2.70.40.10:FF:000001">
    <property type="entry name" value="dCTP deaminase"/>
    <property type="match status" value="1"/>
</dbReference>
<dbReference type="Gene3D" id="2.70.40.10">
    <property type="match status" value="1"/>
</dbReference>
<dbReference type="HAMAP" id="MF_00146">
    <property type="entry name" value="dCTP_deaminase"/>
    <property type="match status" value="1"/>
</dbReference>
<dbReference type="InterPro" id="IPR011962">
    <property type="entry name" value="dCTP_deaminase"/>
</dbReference>
<dbReference type="InterPro" id="IPR036157">
    <property type="entry name" value="dUTPase-like_sf"/>
</dbReference>
<dbReference type="InterPro" id="IPR033704">
    <property type="entry name" value="dUTPase_trimeric"/>
</dbReference>
<dbReference type="NCBIfam" id="TIGR02274">
    <property type="entry name" value="dCTP_deam"/>
    <property type="match status" value="1"/>
</dbReference>
<dbReference type="PANTHER" id="PTHR42680">
    <property type="entry name" value="DCTP DEAMINASE"/>
    <property type="match status" value="1"/>
</dbReference>
<dbReference type="PANTHER" id="PTHR42680:SF3">
    <property type="entry name" value="DCTP DEAMINASE"/>
    <property type="match status" value="1"/>
</dbReference>
<dbReference type="Pfam" id="PF22769">
    <property type="entry name" value="DCD"/>
    <property type="match status" value="1"/>
</dbReference>
<dbReference type="SUPFAM" id="SSF51283">
    <property type="entry name" value="dUTPase-like"/>
    <property type="match status" value="1"/>
</dbReference>
<evidence type="ECO:0000255" key="1">
    <source>
        <dbReference type="HAMAP-Rule" id="MF_00146"/>
    </source>
</evidence>
<name>DCD_NEIM0</name>
<sequence length="188" mass="21294">MSIKSDKWIRRMSEEFGMIDPFEPNQIKEADGKRIISYGTSSYGYDIRCANEFKIFTNINSTIVDPKNFDPKNFVTVEDDCCIIPPNSFALARTVEYFRIPRNVLTVCLGKSTYARCGIIVNVTPFEPEWEGYVTLEFSNTTPLPAKIYAGEGVAQVLFFESDEICKTSYKDRNGKYMGQTGVTLPKA</sequence>
<protein>
    <recommendedName>
        <fullName evidence="1">dCTP deaminase</fullName>
        <ecNumber evidence="1">3.5.4.13</ecNumber>
    </recommendedName>
    <alternativeName>
        <fullName evidence="1">Deoxycytidine triphosphate deaminase</fullName>
    </alternativeName>
</protein>
<accession>A9M3Z7</accession>
<gene>
    <name evidence="1" type="primary">dcd</name>
    <name type="ordered locus">NMCC_0807</name>
</gene>
<organism>
    <name type="scientific">Neisseria meningitidis serogroup C (strain 053442)</name>
    <dbReference type="NCBI Taxonomy" id="374833"/>
    <lineage>
        <taxon>Bacteria</taxon>
        <taxon>Pseudomonadati</taxon>
        <taxon>Pseudomonadota</taxon>
        <taxon>Betaproteobacteria</taxon>
        <taxon>Neisseriales</taxon>
        <taxon>Neisseriaceae</taxon>
        <taxon>Neisseria</taxon>
    </lineage>
</organism>
<reference key="1">
    <citation type="journal article" date="2008" name="Genomics">
        <title>Characterization of ST-4821 complex, a unique Neisseria meningitidis clone.</title>
        <authorList>
            <person name="Peng J."/>
            <person name="Yang L."/>
            <person name="Yang F."/>
            <person name="Yang J."/>
            <person name="Yan Y."/>
            <person name="Nie H."/>
            <person name="Zhang X."/>
            <person name="Xiong Z."/>
            <person name="Jiang Y."/>
            <person name="Cheng F."/>
            <person name="Xu X."/>
            <person name="Chen S."/>
            <person name="Sun L."/>
            <person name="Li W."/>
            <person name="Shen Y."/>
            <person name="Shao Z."/>
            <person name="Liang X."/>
            <person name="Xu J."/>
            <person name="Jin Q."/>
        </authorList>
    </citation>
    <scope>NUCLEOTIDE SEQUENCE [LARGE SCALE GENOMIC DNA]</scope>
    <source>
        <strain>053442</strain>
    </source>
</reference>
<feature type="chain" id="PRO_1000076623" description="dCTP deaminase">
    <location>
        <begin position="1"/>
        <end position="188"/>
    </location>
</feature>
<feature type="active site" description="Proton donor/acceptor" evidence="1">
    <location>
        <position position="137"/>
    </location>
</feature>
<feature type="binding site" evidence="1">
    <location>
        <begin position="111"/>
        <end position="116"/>
    </location>
    <ligand>
        <name>dCTP</name>
        <dbReference type="ChEBI" id="CHEBI:61481"/>
    </ligand>
</feature>
<feature type="binding site" evidence="1">
    <location>
        <begin position="135"/>
        <end position="137"/>
    </location>
    <ligand>
        <name>dCTP</name>
        <dbReference type="ChEBI" id="CHEBI:61481"/>
    </ligand>
</feature>
<feature type="binding site" evidence="1">
    <location>
        <position position="156"/>
    </location>
    <ligand>
        <name>dCTP</name>
        <dbReference type="ChEBI" id="CHEBI:61481"/>
    </ligand>
</feature>
<feature type="binding site" evidence="1">
    <location>
        <position position="170"/>
    </location>
    <ligand>
        <name>dCTP</name>
        <dbReference type="ChEBI" id="CHEBI:61481"/>
    </ligand>
</feature>
<feature type="binding site" evidence="1">
    <location>
        <position position="180"/>
    </location>
    <ligand>
        <name>dCTP</name>
        <dbReference type="ChEBI" id="CHEBI:61481"/>
    </ligand>
</feature>
<proteinExistence type="inferred from homology"/>
<keyword id="KW-0378">Hydrolase</keyword>
<keyword id="KW-0546">Nucleotide metabolism</keyword>
<keyword id="KW-0547">Nucleotide-binding</keyword>
<comment type="function">
    <text evidence="1">Catalyzes the deamination of dCTP to dUTP.</text>
</comment>
<comment type="catalytic activity">
    <reaction evidence="1">
        <text>dCTP + H2O + H(+) = dUTP + NH4(+)</text>
        <dbReference type="Rhea" id="RHEA:22680"/>
        <dbReference type="ChEBI" id="CHEBI:15377"/>
        <dbReference type="ChEBI" id="CHEBI:15378"/>
        <dbReference type="ChEBI" id="CHEBI:28938"/>
        <dbReference type="ChEBI" id="CHEBI:61481"/>
        <dbReference type="ChEBI" id="CHEBI:61555"/>
        <dbReference type="EC" id="3.5.4.13"/>
    </reaction>
</comment>
<comment type="pathway">
    <text evidence="1">Pyrimidine metabolism; dUMP biosynthesis; dUMP from dCTP (dUTP route): step 1/2.</text>
</comment>
<comment type="subunit">
    <text evidence="1">Homotrimer.</text>
</comment>
<comment type="similarity">
    <text evidence="1">Belongs to the dCTP deaminase family.</text>
</comment>